<feature type="chain" id="PRO_1000119161" description="S-adenosylmethionine:tRNA ribosyltransferase-isomerase">
    <location>
        <begin position="1"/>
        <end position="346"/>
    </location>
</feature>
<gene>
    <name evidence="1" type="primary">queA</name>
    <name type="ordered locus">RSKD131_1293</name>
</gene>
<comment type="function">
    <text evidence="1">Transfers and isomerizes the ribose moiety from AdoMet to the 7-aminomethyl group of 7-deazaguanine (preQ1-tRNA) to give epoxyqueuosine (oQ-tRNA).</text>
</comment>
<comment type="catalytic activity">
    <reaction evidence="1">
        <text>7-aminomethyl-7-carbaguanosine(34) in tRNA + S-adenosyl-L-methionine = epoxyqueuosine(34) in tRNA + adenine + L-methionine + 2 H(+)</text>
        <dbReference type="Rhea" id="RHEA:32155"/>
        <dbReference type="Rhea" id="RHEA-COMP:10342"/>
        <dbReference type="Rhea" id="RHEA-COMP:18582"/>
        <dbReference type="ChEBI" id="CHEBI:15378"/>
        <dbReference type="ChEBI" id="CHEBI:16708"/>
        <dbReference type="ChEBI" id="CHEBI:57844"/>
        <dbReference type="ChEBI" id="CHEBI:59789"/>
        <dbReference type="ChEBI" id="CHEBI:82833"/>
        <dbReference type="ChEBI" id="CHEBI:194443"/>
        <dbReference type="EC" id="2.4.99.17"/>
    </reaction>
</comment>
<comment type="pathway">
    <text evidence="1">tRNA modification; tRNA-queuosine biosynthesis.</text>
</comment>
<comment type="subunit">
    <text evidence="1">Monomer.</text>
</comment>
<comment type="subcellular location">
    <subcellularLocation>
        <location evidence="1">Cytoplasm</location>
    </subcellularLocation>
</comment>
<comment type="similarity">
    <text evidence="1">Belongs to the QueA family.</text>
</comment>
<accession>B9KT07</accession>
<sequence>MQLSDFDFDLPERLIATRPARPRTAARLLLAEGDRIEDRHVRDLVGIFRPGDRLVLNNTRVIPARLTGTRTRGEAEARIEVTLMEPAAAGGWRAMAKPLRKLKPGETIRFSDALSAEVAEKGETDLRLVFDRAGAAFDAALADAGAMPLPPYIAARRAPDAQDDEDYQTVFARHAGAVAAPTASLHFDRPLLEALAARGVGFTEVTLHVGAGTFLPVKVEDVTTHRMHAEWGEVTEAAAAEIAATKAAGGRVIPVGTTALRLIESAAASGAIRPWRGETDIFIYPGYRFRVTDALMTNFHLPKSTLLMLVSALMGQERIRAIYDHAVRHDYRFFSYGDASLLIPGG</sequence>
<protein>
    <recommendedName>
        <fullName evidence="1">S-adenosylmethionine:tRNA ribosyltransferase-isomerase</fullName>
        <ecNumber evidence="1">2.4.99.17</ecNumber>
    </recommendedName>
    <alternativeName>
        <fullName evidence="1">Queuosine biosynthesis protein QueA</fullName>
    </alternativeName>
</protein>
<organism>
    <name type="scientific">Cereibacter sphaeroides (strain KD131 / KCTC 12085)</name>
    <name type="common">Rhodobacter sphaeroides</name>
    <dbReference type="NCBI Taxonomy" id="557760"/>
    <lineage>
        <taxon>Bacteria</taxon>
        <taxon>Pseudomonadati</taxon>
        <taxon>Pseudomonadota</taxon>
        <taxon>Alphaproteobacteria</taxon>
        <taxon>Rhodobacterales</taxon>
        <taxon>Paracoccaceae</taxon>
        <taxon>Cereibacter</taxon>
    </lineage>
</organism>
<name>QUEA_CERSK</name>
<proteinExistence type="inferred from homology"/>
<dbReference type="EC" id="2.4.99.17" evidence="1"/>
<dbReference type="EMBL" id="CP001150">
    <property type="protein sequence ID" value="ACM01153.1"/>
    <property type="molecule type" value="Genomic_DNA"/>
</dbReference>
<dbReference type="RefSeq" id="WP_015920644.1">
    <property type="nucleotide sequence ID" value="NC_011963.1"/>
</dbReference>
<dbReference type="SMR" id="B9KT07"/>
<dbReference type="GeneID" id="67446712"/>
<dbReference type="KEGG" id="rsk:RSKD131_1293"/>
<dbReference type="HOGENOM" id="CLU_039110_1_1_5"/>
<dbReference type="UniPathway" id="UPA00392"/>
<dbReference type="GO" id="GO:0005737">
    <property type="term" value="C:cytoplasm"/>
    <property type="evidence" value="ECO:0007669"/>
    <property type="project" value="UniProtKB-SubCell"/>
</dbReference>
<dbReference type="GO" id="GO:0051075">
    <property type="term" value="F:S-adenosylmethionine:tRNA ribosyltransferase-isomerase activity"/>
    <property type="evidence" value="ECO:0007669"/>
    <property type="project" value="UniProtKB-EC"/>
</dbReference>
<dbReference type="GO" id="GO:0008616">
    <property type="term" value="P:queuosine biosynthetic process"/>
    <property type="evidence" value="ECO:0007669"/>
    <property type="project" value="UniProtKB-UniRule"/>
</dbReference>
<dbReference type="GO" id="GO:0002099">
    <property type="term" value="P:tRNA wobble guanine modification"/>
    <property type="evidence" value="ECO:0007669"/>
    <property type="project" value="TreeGrafter"/>
</dbReference>
<dbReference type="FunFam" id="3.40.1780.10:FF:000001">
    <property type="entry name" value="S-adenosylmethionine:tRNA ribosyltransferase-isomerase"/>
    <property type="match status" value="1"/>
</dbReference>
<dbReference type="Gene3D" id="2.40.10.240">
    <property type="entry name" value="QueA-like"/>
    <property type="match status" value="1"/>
</dbReference>
<dbReference type="Gene3D" id="3.40.1780.10">
    <property type="entry name" value="QueA-like"/>
    <property type="match status" value="1"/>
</dbReference>
<dbReference type="HAMAP" id="MF_00113">
    <property type="entry name" value="QueA"/>
    <property type="match status" value="1"/>
</dbReference>
<dbReference type="InterPro" id="IPR003699">
    <property type="entry name" value="QueA"/>
</dbReference>
<dbReference type="InterPro" id="IPR042118">
    <property type="entry name" value="QueA_dom1"/>
</dbReference>
<dbReference type="InterPro" id="IPR042119">
    <property type="entry name" value="QueA_dom2"/>
</dbReference>
<dbReference type="InterPro" id="IPR036100">
    <property type="entry name" value="QueA_sf"/>
</dbReference>
<dbReference type="NCBIfam" id="NF001140">
    <property type="entry name" value="PRK00147.1"/>
    <property type="match status" value="1"/>
</dbReference>
<dbReference type="NCBIfam" id="TIGR00113">
    <property type="entry name" value="queA"/>
    <property type="match status" value="1"/>
</dbReference>
<dbReference type="PANTHER" id="PTHR30307">
    <property type="entry name" value="S-ADENOSYLMETHIONINE:TRNA RIBOSYLTRANSFERASE-ISOMERASE"/>
    <property type="match status" value="1"/>
</dbReference>
<dbReference type="PANTHER" id="PTHR30307:SF0">
    <property type="entry name" value="S-ADENOSYLMETHIONINE:TRNA RIBOSYLTRANSFERASE-ISOMERASE"/>
    <property type="match status" value="1"/>
</dbReference>
<dbReference type="Pfam" id="PF02547">
    <property type="entry name" value="Queuosine_synth"/>
    <property type="match status" value="1"/>
</dbReference>
<dbReference type="SUPFAM" id="SSF111337">
    <property type="entry name" value="QueA-like"/>
    <property type="match status" value="1"/>
</dbReference>
<evidence type="ECO:0000255" key="1">
    <source>
        <dbReference type="HAMAP-Rule" id="MF_00113"/>
    </source>
</evidence>
<keyword id="KW-0963">Cytoplasm</keyword>
<keyword id="KW-0671">Queuosine biosynthesis</keyword>
<keyword id="KW-0949">S-adenosyl-L-methionine</keyword>
<keyword id="KW-0808">Transferase</keyword>
<reference key="1">
    <citation type="journal article" date="2009" name="J. Bacteriol.">
        <title>Complete genome sequence of Rhodobacter sphaeroides KD131.</title>
        <authorList>
            <person name="Lim S.-K."/>
            <person name="Kim S.J."/>
            <person name="Cha S.H."/>
            <person name="Oh Y.-K."/>
            <person name="Rhee H.-J."/>
            <person name="Kim M.-S."/>
            <person name="Lee J.K."/>
        </authorList>
    </citation>
    <scope>NUCLEOTIDE SEQUENCE [LARGE SCALE GENOMIC DNA]</scope>
    <source>
        <strain>KD131 / KCTC 12085</strain>
    </source>
</reference>